<sequence length="533" mass="61586">MLYEKFEYNINNLIGNFGLSKMSIAVSGGSDSVALLYLANIWAEKNNIELFVISVDHNLREQSKQETHYIQNISNSLNRKHYSLSFDHQNNFSNLQERAREGRYDLMTNLCLELDILVLLTAHHEDDYVENFCLRLERNSGIFGLSSSNINWYNNIHIIRPLYNIPKSELVEYLVSHNIKWFEDESNSSDKYRRNVIRQKLAKGADYIRHFSKPVYREEFKGDTERSTAAYTSVGEEALLRGPVKLTVSSRGLTTVKTIKSTNNFSIFNWIPWSSHGMTEVKLIHATMPREDASTGTASKLSLEAKCGKMSKAAIISQQLKTNKRIENEFKPELISAIAEAVKIFEYGFAFLDLVKFDKFSNEVKVQIINFLLIIISGQSRAARFYSVEPILKLITQDVNFKNTLHGCIIKRIQNELLIYREFGKKLPESKILLDKSVIWDNRFCITKNQETPNCFVTHLSLKDYKIIKKQLDLEPLKNLSCKNHNAVLLTLPIIKILEKVIAIPHISYYDNDMWNFEVSFSPNFVSRFTHFC</sequence>
<accession>C4K162</accession>
<dbReference type="EC" id="6.3.4.19" evidence="1"/>
<dbReference type="EMBL" id="CP001227">
    <property type="protein sequence ID" value="ACR47313.1"/>
    <property type="molecule type" value="Genomic_DNA"/>
</dbReference>
<dbReference type="RefSeq" id="WP_012736577.1">
    <property type="nucleotide sequence ID" value="NC_012730.1"/>
</dbReference>
<dbReference type="KEGG" id="rpk:RPR_02390"/>
<dbReference type="HOGENOM" id="CLU_018869_3_2_5"/>
<dbReference type="Proteomes" id="UP000005015">
    <property type="component" value="Chromosome"/>
</dbReference>
<dbReference type="GO" id="GO:0005737">
    <property type="term" value="C:cytoplasm"/>
    <property type="evidence" value="ECO:0007669"/>
    <property type="project" value="UniProtKB-SubCell"/>
</dbReference>
<dbReference type="GO" id="GO:0005524">
    <property type="term" value="F:ATP binding"/>
    <property type="evidence" value="ECO:0007669"/>
    <property type="project" value="UniProtKB-UniRule"/>
</dbReference>
<dbReference type="GO" id="GO:0032267">
    <property type="term" value="F:tRNA(Ile)-lysidine synthase activity"/>
    <property type="evidence" value="ECO:0007669"/>
    <property type="project" value="UniProtKB-EC"/>
</dbReference>
<dbReference type="GO" id="GO:0006400">
    <property type="term" value="P:tRNA modification"/>
    <property type="evidence" value="ECO:0007669"/>
    <property type="project" value="UniProtKB-UniRule"/>
</dbReference>
<dbReference type="CDD" id="cd01992">
    <property type="entry name" value="TilS_N"/>
    <property type="match status" value="1"/>
</dbReference>
<dbReference type="Gene3D" id="3.40.50.620">
    <property type="entry name" value="HUPs"/>
    <property type="match status" value="1"/>
</dbReference>
<dbReference type="HAMAP" id="MF_01161">
    <property type="entry name" value="tRNA_Ile_lys_synt"/>
    <property type="match status" value="1"/>
</dbReference>
<dbReference type="InterPro" id="IPR014729">
    <property type="entry name" value="Rossmann-like_a/b/a_fold"/>
</dbReference>
<dbReference type="InterPro" id="IPR005728">
    <property type="entry name" value="RPE1"/>
</dbReference>
<dbReference type="InterPro" id="IPR011063">
    <property type="entry name" value="TilS/TtcA_N"/>
</dbReference>
<dbReference type="InterPro" id="IPR012094">
    <property type="entry name" value="tRNA_Ile_lys_synt"/>
</dbReference>
<dbReference type="InterPro" id="IPR012795">
    <property type="entry name" value="tRNA_Ile_lys_synt_N"/>
</dbReference>
<dbReference type="NCBIfam" id="TIGR02432">
    <property type="entry name" value="lysidine_TilS_N"/>
    <property type="match status" value="1"/>
</dbReference>
<dbReference type="NCBIfam" id="TIGR01045">
    <property type="entry name" value="RPE1"/>
    <property type="match status" value="1"/>
</dbReference>
<dbReference type="PANTHER" id="PTHR43033">
    <property type="entry name" value="TRNA(ILE)-LYSIDINE SYNTHASE-RELATED"/>
    <property type="match status" value="1"/>
</dbReference>
<dbReference type="PANTHER" id="PTHR43033:SF1">
    <property type="entry name" value="TRNA(ILE)-LYSIDINE SYNTHASE-RELATED"/>
    <property type="match status" value="1"/>
</dbReference>
<dbReference type="Pfam" id="PF01171">
    <property type="entry name" value="ATP_bind_3"/>
    <property type="match status" value="1"/>
</dbReference>
<dbReference type="SUPFAM" id="SSF52402">
    <property type="entry name" value="Adenine nucleotide alpha hydrolases-like"/>
    <property type="match status" value="1"/>
</dbReference>
<evidence type="ECO:0000255" key="1">
    <source>
        <dbReference type="HAMAP-Rule" id="MF_01161"/>
    </source>
</evidence>
<keyword id="KW-0067">ATP-binding</keyword>
<keyword id="KW-0963">Cytoplasm</keyword>
<keyword id="KW-0436">Ligase</keyword>
<keyword id="KW-0547">Nucleotide-binding</keyword>
<keyword id="KW-0819">tRNA processing</keyword>
<gene>
    <name evidence="1" type="primary">tilS</name>
    <name type="ordered locus">RPR_02390</name>
</gene>
<proteinExistence type="inferred from homology"/>
<organism>
    <name type="scientific">Rickettsia peacockii (strain Rustic)</name>
    <dbReference type="NCBI Taxonomy" id="562019"/>
    <lineage>
        <taxon>Bacteria</taxon>
        <taxon>Pseudomonadati</taxon>
        <taxon>Pseudomonadota</taxon>
        <taxon>Alphaproteobacteria</taxon>
        <taxon>Rickettsiales</taxon>
        <taxon>Rickettsiaceae</taxon>
        <taxon>Rickettsieae</taxon>
        <taxon>Rickettsia</taxon>
        <taxon>spotted fever group</taxon>
    </lineage>
</organism>
<comment type="function">
    <text evidence="1">Ligates lysine onto the cytidine present at position 34 of the AUA codon-specific tRNA(Ile) that contains the anticodon CAU, in an ATP-dependent manner. Cytidine is converted to lysidine, thus changing the amino acid specificity of the tRNA from methionine to isoleucine.</text>
</comment>
<comment type="catalytic activity">
    <reaction evidence="1">
        <text>cytidine(34) in tRNA(Ile2) + L-lysine + ATP = lysidine(34) in tRNA(Ile2) + AMP + diphosphate + H(+)</text>
        <dbReference type="Rhea" id="RHEA:43744"/>
        <dbReference type="Rhea" id="RHEA-COMP:10625"/>
        <dbReference type="Rhea" id="RHEA-COMP:10670"/>
        <dbReference type="ChEBI" id="CHEBI:15378"/>
        <dbReference type="ChEBI" id="CHEBI:30616"/>
        <dbReference type="ChEBI" id="CHEBI:32551"/>
        <dbReference type="ChEBI" id="CHEBI:33019"/>
        <dbReference type="ChEBI" id="CHEBI:82748"/>
        <dbReference type="ChEBI" id="CHEBI:83665"/>
        <dbReference type="ChEBI" id="CHEBI:456215"/>
        <dbReference type="EC" id="6.3.4.19"/>
    </reaction>
</comment>
<comment type="subcellular location">
    <subcellularLocation>
        <location evidence="1">Cytoplasm</location>
    </subcellularLocation>
</comment>
<comment type="domain">
    <text>The N-terminal region contains the highly conserved SGGXDS motif, predicted to be a P-loop motif involved in ATP binding.</text>
</comment>
<comment type="similarity">
    <text evidence="1">Belongs to the tRNA(Ile)-lysidine synthase family.</text>
</comment>
<feature type="chain" id="PRO_1000213719" description="tRNA(Ile)-lysidine synthase">
    <location>
        <begin position="1"/>
        <end position="533"/>
    </location>
</feature>
<feature type="binding site" evidence="1">
    <location>
        <begin position="27"/>
        <end position="32"/>
    </location>
    <ligand>
        <name>ATP</name>
        <dbReference type="ChEBI" id="CHEBI:30616"/>
    </ligand>
</feature>
<name>TILS_RICPU</name>
<protein>
    <recommendedName>
        <fullName evidence="1">tRNA(Ile)-lysidine synthase</fullName>
        <ecNumber evidence="1">6.3.4.19</ecNumber>
    </recommendedName>
    <alternativeName>
        <fullName evidence="1">tRNA(Ile)-2-lysyl-cytidine synthase</fullName>
    </alternativeName>
    <alternativeName>
        <fullName evidence="1">tRNA(Ile)-lysidine synthetase</fullName>
    </alternativeName>
</protein>
<reference key="1">
    <citation type="journal article" date="2009" name="PLoS ONE">
        <title>Genome sequence of the endosymbiont Rickettsia peacockii and comparison with virulent Rickettsia rickettsii: identification of virulence factors.</title>
        <authorList>
            <person name="Felsheim R.F."/>
            <person name="Kurtti T.J."/>
            <person name="Munderloh U.G."/>
        </authorList>
    </citation>
    <scope>NUCLEOTIDE SEQUENCE [LARGE SCALE GENOMIC DNA]</scope>
    <source>
        <strain>Rustic</strain>
    </source>
</reference>